<organism>
    <name type="scientific">Pseudomonas entomophila (strain L48)</name>
    <dbReference type="NCBI Taxonomy" id="384676"/>
    <lineage>
        <taxon>Bacteria</taxon>
        <taxon>Pseudomonadati</taxon>
        <taxon>Pseudomonadota</taxon>
        <taxon>Gammaproteobacteria</taxon>
        <taxon>Pseudomonadales</taxon>
        <taxon>Pseudomonadaceae</taxon>
        <taxon>Pseudomonas</taxon>
    </lineage>
</organism>
<feature type="chain" id="PRO_0000286891" description="Chaperone modulatory protein CbpM">
    <location>
        <begin position="1"/>
        <end position="101"/>
    </location>
</feature>
<name>CBPM_PSEE4</name>
<protein>
    <recommendedName>
        <fullName evidence="1">Chaperone modulatory protein CbpM</fullName>
    </recommendedName>
</protein>
<reference key="1">
    <citation type="journal article" date="2006" name="Nat. Biotechnol.">
        <title>Complete genome sequence of the entomopathogenic and metabolically versatile soil bacterium Pseudomonas entomophila.</title>
        <authorList>
            <person name="Vodovar N."/>
            <person name="Vallenet D."/>
            <person name="Cruveiller S."/>
            <person name="Rouy Z."/>
            <person name="Barbe V."/>
            <person name="Acosta C."/>
            <person name="Cattolico L."/>
            <person name="Jubin C."/>
            <person name="Lajus A."/>
            <person name="Segurens B."/>
            <person name="Vacherie B."/>
            <person name="Wincker P."/>
            <person name="Weissenbach J."/>
            <person name="Lemaitre B."/>
            <person name="Medigue C."/>
            <person name="Boccard F."/>
        </authorList>
    </citation>
    <scope>NUCLEOTIDE SEQUENCE [LARGE SCALE GENOMIC DNA]</scope>
    <source>
        <strain>L48</strain>
    </source>
</reference>
<comment type="function">
    <text evidence="1">Interacts with CbpA and inhibits both the DnaJ-like co-chaperone activity and the DNA binding activity of CbpA. Together with CbpA, modulates the activity of the DnaK chaperone system. Does not inhibit the co-chaperone activity of DnaJ.</text>
</comment>
<comment type="similarity">
    <text evidence="1">Belongs to the CbpM family.</text>
</comment>
<dbReference type="EMBL" id="CT573326">
    <property type="protein sequence ID" value="CAK17545.1"/>
    <property type="molecule type" value="Genomic_DNA"/>
</dbReference>
<dbReference type="RefSeq" id="WP_011535907.1">
    <property type="nucleotide sequence ID" value="NC_008027.1"/>
</dbReference>
<dbReference type="SMR" id="Q1I491"/>
<dbReference type="STRING" id="384676.PSEEN4895"/>
<dbReference type="GeneID" id="32807848"/>
<dbReference type="KEGG" id="pen:PSEEN4895"/>
<dbReference type="eggNOG" id="COG0789">
    <property type="taxonomic scope" value="Bacteria"/>
</dbReference>
<dbReference type="HOGENOM" id="CLU_144710_3_1_6"/>
<dbReference type="OrthoDB" id="5567704at2"/>
<dbReference type="Proteomes" id="UP000000658">
    <property type="component" value="Chromosome"/>
</dbReference>
<dbReference type="Gene3D" id="1.10.1660.10">
    <property type="match status" value="1"/>
</dbReference>
<dbReference type="HAMAP" id="MF_01155">
    <property type="entry name" value="CbpM"/>
    <property type="match status" value="1"/>
</dbReference>
<dbReference type="InterPro" id="IPR022835">
    <property type="entry name" value="CbpM"/>
</dbReference>
<dbReference type="Pfam" id="PF13591">
    <property type="entry name" value="MerR_2"/>
    <property type="match status" value="1"/>
</dbReference>
<proteinExistence type="inferred from homology"/>
<accession>Q1I491</accession>
<evidence type="ECO:0000255" key="1">
    <source>
        <dbReference type="HAMAP-Rule" id="MF_01155"/>
    </source>
</evidence>
<sequence>MSSTLIVQLDMRTLCQEADVSADWVIEIVEHGIVEPSGRTPEEWVFDDRAPVTLKRAVKLHQELELEWEGVALALELLEEVQQLRSENSMLKQRLGRFTQM</sequence>
<gene>
    <name evidence="1" type="primary">cbpM</name>
    <name type="ordered locus">PSEEN4895</name>
</gene>